<protein>
    <recommendedName>
        <fullName evidence="2">Small ribosomal subunit protein uS4c</fullName>
    </recommendedName>
    <alternativeName>
        <fullName>30S ribosomal protein S4, chloroplastic</fullName>
    </alternativeName>
</protein>
<reference key="1">
    <citation type="journal article" date="2000" name="Nature">
        <title>Ancestral chloroplast genome in Mesostigma viride reveals an early branch of green plant evolution.</title>
        <authorList>
            <person name="Lemieux C."/>
            <person name="Otis C."/>
            <person name="Turmel M."/>
        </authorList>
    </citation>
    <scope>NUCLEOTIDE SEQUENCE [LARGE SCALE GENOMIC DNA]</scope>
    <source>
        <strain>NIES-296 / KY-14 / CCMP 2046</strain>
    </source>
</reference>
<feature type="chain" id="PRO_0000132628" description="Small ribosomal subunit protein uS4c">
    <location>
        <begin position="1"/>
        <end position="205"/>
    </location>
</feature>
<feature type="domain" description="S4 RNA-binding">
    <location>
        <begin position="93"/>
        <end position="156"/>
    </location>
</feature>
<accession>Q9MUN0</accession>
<dbReference type="EMBL" id="AF166114">
    <property type="protein sequence ID" value="AAF43870.1"/>
    <property type="molecule type" value="Genomic_DNA"/>
</dbReference>
<dbReference type="RefSeq" id="NP_038430.1">
    <property type="nucleotide sequence ID" value="NC_002186.1"/>
</dbReference>
<dbReference type="SMR" id="Q9MUN0"/>
<dbReference type="GeneID" id="800913"/>
<dbReference type="GO" id="GO:0009507">
    <property type="term" value="C:chloroplast"/>
    <property type="evidence" value="ECO:0007669"/>
    <property type="project" value="UniProtKB-SubCell"/>
</dbReference>
<dbReference type="GO" id="GO:0015935">
    <property type="term" value="C:small ribosomal subunit"/>
    <property type="evidence" value="ECO:0007669"/>
    <property type="project" value="InterPro"/>
</dbReference>
<dbReference type="GO" id="GO:0019843">
    <property type="term" value="F:rRNA binding"/>
    <property type="evidence" value="ECO:0007669"/>
    <property type="project" value="UniProtKB-UniRule"/>
</dbReference>
<dbReference type="GO" id="GO:0003735">
    <property type="term" value="F:structural constituent of ribosome"/>
    <property type="evidence" value="ECO:0007669"/>
    <property type="project" value="InterPro"/>
</dbReference>
<dbReference type="GO" id="GO:0042274">
    <property type="term" value="P:ribosomal small subunit biogenesis"/>
    <property type="evidence" value="ECO:0007669"/>
    <property type="project" value="TreeGrafter"/>
</dbReference>
<dbReference type="GO" id="GO:0006412">
    <property type="term" value="P:translation"/>
    <property type="evidence" value="ECO:0007669"/>
    <property type="project" value="UniProtKB-UniRule"/>
</dbReference>
<dbReference type="CDD" id="cd00165">
    <property type="entry name" value="S4"/>
    <property type="match status" value="1"/>
</dbReference>
<dbReference type="FunFam" id="3.10.290.10:FF:000001">
    <property type="entry name" value="30S ribosomal protein S4"/>
    <property type="match status" value="1"/>
</dbReference>
<dbReference type="FunFam" id="1.10.1050.10:FF:000002">
    <property type="entry name" value="30S ribosomal protein S4, chloroplastic"/>
    <property type="match status" value="1"/>
</dbReference>
<dbReference type="Gene3D" id="1.10.1050.10">
    <property type="entry name" value="Ribosomal Protein S4 Delta 41, Chain A, domain 1"/>
    <property type="match status" value="1"/>
</dbReference>
<dbReference type="Gene3D" id="3.10.290.10">
    <property type="entry name" value="RNA-binding S4 domain"/>
    <property type="match status" value="1"/>
</dbReference>
<dbReference type="HAMAP" id="MF_01306_B">
    <property type="entry name" value="Ribosomal_uS4_B"/>
    <property type="match status" value="1"/>
</dbReference>
<dbReference type="InterPro" id="IPR022801">
    <property type="entry name" value="Ribosomal_uS4"/>
</dbReference>
<dbReference type="InterPro" id="IPR005709">
    <property type="entry name" value="Ribosomal_uS4_bac-type"/>
</dbReference>
<dbReference type="InterPro" id="IPR018079">
    <property type="entry name" value="Ribosomal_uS4_CS"/>
</dbReference>
<dbReference type="InterPro" id="IPR001912">
    <property type="entry name" value="Ribosomal_uS4_N"/>
</dbReference>
<dbReference type="InterPro" id="IPR002942">
    <property type="entry name" value="S4_RNA-bd"/>
</dbReference>
<dbReference type="InterPro" id="IPR036986">
    <property type="entry name" value="S4_RNA-bd_sf"/>
</dbReference>
<dbReference type="NCBIfam" id="NF003717">
    <property type="entry name" value="PRK05327.1"/>
    <property type="match status" value="1"/>
</dbReference>
<dbReference type="NCBIfam" id="TIGR01017">
    <property type="entry name" value="rpsD_bact"/>
    <property type="match status" value="1"/>
</dbReference>
<dbReference type="PANTHER" id="PTHR11831">
    <property type="entry name" value="30S 40S RIBOSOMAL PROTEIN"/>
    <property type="match status" value="1"/>
</dbReference>
<dbReference type="PANTHER" id="PTHR11831:SF4">
    <property type="entry name" value="SMALL RIBOSOMAL SUBUNIT PROTEIN US4M"/>
    <property type="match status" value="1"/>
</dbReference>
<dbReference type="Pfam" id="PF00163">
    <property type="entry name" value="Ribosomal_S4"/>
    <property type="match status" value="1"/>
</dbReference>
<dbReference type="Pfam" id="PF01479">
    <property type="entry name" value="S4"/>
    <property type="match status" value="1"/>
</dbReference>
<dbReference type="SMART" id="SM01390">
    <property type="entry name" value="Ribosomal_S4"/>
    <property type="match status" value="1"/>
</dbReference>
<dbReference type="SMART" id="SM00363">
    <property type="entry name" value="S4"/>
    <property type="match status" value="1"/>
</dbReference>
<dbReference type="SUPFAM" id="SSF55174">
    <property type="entry name" value="Alpha-L RNA-binding motif"/>
    <property type="match status" value="1"/>
</dbReference>
<dbReference type="PROSITE" id="PS00632">
    <property type="entry name" value="RIBOSOMAL_S4"/>
    <property type="match status" value="1"/>
</dbReference>
<dbReference type="PROSITE" id="PS50889">
    <property type="entry name" value="S4"/>
    <property type="match status" value="1"/>
</dbReference>
<proteinExistence type="inferred from homology"/>
<gene>
    <name type="primary">rps4</name>
</gene>
<geneLocation type="chloroplast"/>
<sequence length="205" mass="23366">MSRYRGPRLKIVRKLGDLPGLTSKINKNLQLAEQNKGKKSTKTKLSQYGIRLQEKQKLKYNYGVTEKQLLLYIRKARTIKGSTGQMLLQYLEMRLDNTVFRLGLAPTIAGARQLVNHGHIMVNNRIVTIPSYKCKPKDILSIRNNNKSRNLVLNNLASPSVSKIPNHLLLKKDTLTATVNGIVERKSIPLEINELLVVEYYSRQT</sequence>
<evidence type="ECO:0000250" key="1"/>
<evidence type="ECO:0000305" key="2"/>
<organism>
    <name type="scientific">Mesostigma viride</name>
    <name type="common">Green alga</name>
    <dbReference type="NCBI Taxonomy" id="41882"/>
    <lineage>
        <taxon>Eukaryota</taxon>
        <taxon>Viridiplantae</taxon>
        <taxon>Streptophyta</taxon>
        <taxon>Mesostigmatophyceae</taxon>
        <taxon>Mesostigmatales</taxon>
        <taxon>Mesostigmataceae</taxon>
        <taxon>Mesostigma</taxon>
    </lineage>
</organism>
<comment type="function">
    <text evidence="1">One of the primary rRNA binding proteins, it binds directly to 16S rRNA where it nucleates assembly of the body of the 30S subunit.</text>
</comment>
<comment type="function">
    <text evidence="1">With S5 and S12 plays an important role in translational accuracy.</text>
</comment>
<comment type="subunit">
    <text evidence="1">Part of the 30S ribosomal subunit. Contacts protein S5. The interaction surface between S4 and S5 is involved in control of translational fidelity (By similarity).</text>
</comment>
<comment type="subcellular location">
    <subcellularLocation>
        <location>Plastid</location>
        <location>Chloroplast</location>
    </subcellularLocation>
</comment>
<comment type="similarity">
    <text evidence="2">Belongs to the universal ribosomal protein uS4 family.</text>
</comment>
<keyword id="KW-0150">Chloroplast</keyword>
<keyword id="KW-0934">Plastid</keyword>
<keyword id="KW-0687">Ribonucleoprotein</keyword>
<keyword id="KW-0689">Ribosomal protein</keyword>
<keyword id="KW-0694">RNA-binding</keyword>
<keyword id="KW-0699">rRNA-binding</keyword>
<name>RR4_MESVI</name>